<reference key="1">
    <citation type="journal article" date="2009" name="Proc. Natl. Acad. Sci. U.S.A.">
        <title>Eukaryote-to-eukaryote gene transfer events revealed by the genome sequence of the wine yeast Saccharomyces cerevisiae EC1118.</title>
        <authorList>
            <person name="Novo M."/>
            <person name="Bigey F."/>
            <person name="Beyne E."/>
            <person name="Galeote V."/>
            <person name="Gavory F."/>
            <person name="Mallet S."/>
            <person name="Cambon B."/>
            <person name="Legras J.-L."/>
            <person name="Wincker P."/>
            <person name="Casaregola S."/>
            <person name="Dequin S."/>
        </authorList>
    </citation>
    <scope>NUCLEOTIDE SEQUENCE [LARGE SCALE GENOMIC DNA]</scope>
    <source>
        <strain>Lalvin EC1118 / Prise de mousse</strain>
    </source>
</reference>
<name>GATB_YEAS8</name>
<feature type="chain" id="PRO_0000413277" description="Glutamyl-tRNA(Gln) amidotransferase subunit B, mitochondrial">
    <location>
        <begin position="1"/>
        <end position="541"/>
    </location>
</feature>
<evidence type="ECO:0000255" key="1">
    <source>
        <dbReference type="HAMAP-Rule" id="MF_03147"/>
    </source>
</evidence>
<proteinExistence type="inferred from homology"/>
<dbReference type="EC" id="6.3.5.-" evidence="1"/>
<dbReference type="EMBL" id="FN393060">
    <property type="protein sequence ID" value="CAY77704.1"/>
    <property type="molecule type" value="Genomic_DNA"/>
</dbReference>
<dbReference type="SMR" id="C8Z3R4"/>
<dbReference type="HOGENOM" id="CLU_019240_4_0_1"/>
<dbReference type="OrthoDB" id="15362at4893"/>
<dbReference type="Proteomes" id="UP000000286">
    <property type="component" value="Chromosome II, Scaffold EC1118_1B15"/>
</dbReference>
<dbReference type="GO" id="GO:0030956">
    <property type="term" value="C:glutamyl-tRNA(Gln) amidotransferase complex"/>
    <property type="evidence" value="ECO:0007669"/>
    <property type="project" value="UniProtKB-UniRule"/>
</dbReference>
<dbReference type="GO" id="GO:0005739">
    <property type="term" value="C:mitochondrion"/>
    <property type="evidence" value="ECO:0007669"/>
    <property type="project" value="UniProtKB-SubCell"/>
</dbReference>
<dbReference type="GO" id="GO:0005524">
    <property type="term" value="F:ATP binding"/>
    <property type="evidence" value="ECO:0007669"/>
    <property type="project" value="UniProtKB-KW"/>
</dbReference>
<dbReference type="GO" id="GO:0050567">
    <property type="term" value="F:glutaminyl-tRNA synthase (glutamine-hydrolyzing) activity"/>
    <property type="evidence" value="ECO:0007669"/>
    <property type="project" value="UniProtKB-UniRule"/>
</dbReference>
<dbReference type="GO" id="GO:0070681">
    <property type="term" value="P:glutaminyl-tRNAGln biosynthesis via transamidation"/>
    <property type="evidence" value="ECO:0007669"/>
    <property type="project" value="UniProtKB-UniRule"/>
</dbReference>
<dbReference type="GO" id="GO:0032543">
    <property type="term" value="P:mitochondrial translation"/>
    <property type="evidence" value="ECO:0007669"/>
    <property type="project" value="UniProtKB-UniRule"/>
</dbReference>
<dbReference type="FunFam" id="1.10.10.410:FF:000005">
    <property type="entry name" value="Glutamyl-tRNA(Gln) amidotransferase subunit B, mitochondrial"/>
    <property type="match status" value="1"/>
</dbReference>
<dbReference type="Gene3D" id="1.10.10.410">
    <property type="match status" value="1"/>
</dbReference>
<dbReference type="HAMAP" id="MF_00121">
    <property type="entry name" value="GatB"/>
    <property type="match status" value="1"/>
</dbReference>
<dbReference type="InterPro" id="IPR017959">
    <property type="entry name" value="Asn/Gln-tRNA_amidoTrfase_suB/E"/>
</dbReference>
<dbReference type="InterPro" id="IPR006075">
    <property type="entry name" value="Asn/Gln-tRNA_Trfase_suB/E_cat"/>
</dbReference>
<dbReference type="InterPro" id="IPR018027">
    <property type="entry name" value="Asn/Gln_amidotransferase"/>
</dbReference>
<dbReference type="InterPro" id="IPR003789">
    <property type="entry name" value="Asn/Gln_tRNA_amidoTrase-B-like"/>
</dbReference>
<dbReference type="InterPro" id="IPR004413">
    <property type="entry name" value="GatB"/>
</dbReference>
<dbReference type="InterPro" id="IPR023168">
    <property type="entry name" value="GatB_Yqey_C_2"/>
</dbReference>
<dbReference type="InterPro" id="IPR017958">
    <property type="entry name" value="Gln-tRNA_amidoTrfase_suB_CS"/>
</dbReference>
<dbReference type="InterPro" id="IPR014746">
    <property type="entry name" value="Gln_synth/guanido_kin_cat_dom"/>
</dbReference>
<dbReference type="NCBIfam" id="TIGR00133">
    <property type="entry name" value="gatB"/>
    <property type="match status" value="1"/>
</dbReference>
<dbReference type="NCBIfam" id="NF004012">
    <property type="entry name" value="PRK05477.1-2"/>
    <property type="match status" value="1"/>
</dbReference>
<dbReference type="PANTHER" id="PTHR11659">
    <property type="entry name" value="GLUTAMYL-TRNA GLN AMIDOTRANSFERASE SUBUNIT B MITOCHONDRIAL AND PROKARYOTIC PET112-RELATED"/>
    <property type="match status" value="1"/>
</dbReference>
<dbReference type="PANTHER" id="PTHR11659:SF0">
    <property type="entry name" value="GLUTAMYL-TRNA(GLN) AMIDOTRANSFERASE SUBUNIT B, MITOCHONDRIAL"/>
    <property type="match status" value="1"/>
</dbReference>
<dbReference type="Pfam" id="PF02934">
    <property type="entry name" value="GatB_N"/>
    <property type="match status" value="1"/>
</dbReference>
<dbReference type="Pfam" id="PF02637">
    <property type="entry name" value="GatB_Yqey"/>
    <property type="match status" value="1"/>
</dbReference>
<dbReference type="SMART" id="SM00845">
    <property type="entry name" value="GatB_Yqey"/>
    <property type="match status" value="1"/>
</dbReference>
<dbReference type="SUPFAM" id="SSF89095">
    <property type="entry name" value="GatB/YqeY motif"/>
    <property type="match status" value="1"/>
</dbReference>
<dbReference type="SUPFAM" id="SSF55931">
    <property type="entry name" value="Glutamine synthetase/guanido kinase"/>
    <property type="match status" value="1"/>
</dbReference>
<dbReference type="PROSITE" id="PS01234">
    <property type="entry name" value="GATB"/>
    <property type="match status" value="1"/>
</dbReference>
<accession>C8Z3R4</accession>
<comment type="function">
    <text evidence="1">Allows the formation of correctly charged Gln-tRNA(Gln) through the transamidation of misacylated Glu-tRNA(Gln) in the mitochondria. The reaction takes place in the presence of glutamine and ATP through an activated gamma-phospho-Glu-tRNA(Gln).</text>
</comment>
<comment type="catalytic activity">
    <reaction evidence="1">
        <text>L-glutamyl-tRNA(Gln) + L-glutamine + ATP + H2O = L-glutaminyl-tRNA(Gln) + L-glutamate + ADP + phosphate + H(+)</text>
        <dbReference type="Rhea" id="RHEA:17521"/>
        <dbReference type="Rhea" id="RHEA-COMP:9681"/>
        <dbReference type="Rhea" id="RHEA-COMP:9684"/>
        <dbReference type="ChEBI" id="CHEBI:15377"/>
        <dbReference type="ChEBI" id="CHEBI:15378"/>
        <dbReference type="ChEBI" id="CHEBI:29985"/>
        <dbReference type="ChEBI" id="CHEBI:30616"/>
        <dbReference type="ChEBI" id="CHEBI:43474"/>
        <dbReference type="ChEBI" id="CHEBI:58359"/>
        <dbReference type="ChEBI" id="CHEBI:78520"/>
        <dbReference type="ChEBI" id="CHEBI:78521"/>
        <dbReference type="ChEBI" id="CHEBI:456216"/>
    </reaction>
</comment>
<comment type="subunit">
    <text evidence="1">Subunit of the heterotrimeric GatFAB amidotransferase (AdT) complex, composed of A, B and F subunits.</text>
</comment>
<comment type="subcellular location">
    <subcellularLocation>
        <location evidence="1">Mitochondrion</location>
    </subcellularLocation>
</comment>
<comment type="miscellaneous">
    <text evidence="1">This protein may be expected to contain an N-terminal transit peptide but none has been predicted.</text>
</comment>
<comment type="similarity">
    <text evidence="1">Belongs to the GatB/GatE family. GatB subfamily.</text>
</comment>
<protein>
    <recommendedName>
        <fullName evidence="1">Glutamyl-tRNA(Gln) amidotransferase subunit B, mitochondrial</fullName>
        <shortName evidence="1">Glu-AdT subunit B</shortName>
        <ecNumber evidence="1">6.3.5.-</ecNumber>
    </recommendedName>
</protein>
<gene>
    <name evidence="1" type="primary">PET112</name>
    <name type="ORF">EC1118_1B15_0320g</name>
</gene>
<organism>
    <name type="scientific">Saccharomyces cerevisiae (strain Lalvin EC1118 / Prise de mousse)</name>
    <name type="common">Baker's yeast</name>
    <dbReference type="NCBI Taxonomy" id="643680"/>
    <lineage>
        <taxon>Eukaryota</taxon>
        <taxon>Fungi</taxon>
        <taxon>Dikarya</taxon>
        <taxon>Ascomycota</taxon>
        <taxon>Saccharomycotina</taxon>
        <taxon>Saccharomycetes</taxon>
        <taxon>Saccharomycetales</taxon>
        <taxon>Saccharomycetaceae</taxon>
        <taxon>Saccharomyces</taxon>
    </lineage>
</organism>
<sequence>MLQLARFYSLARTKAIHSHGAPFRPEYALKCGLEIHTQLNTKNKLFSQSTNSATSLVDAPNHHTSYYDIALPGTQPVLNLEAILFAMKLSLALGSQVNSISQFDRKHYFYGDQPQGYQLTQHYRPFARGGKINLSKELDDIDESAKEIGILQLQIEQDTGKSHYTETDKDVITLVDLNRSNVPLIELVTKPDFSDIKQVRAFIKKYQNLVRHLHISSGDLETGAMRVDVNLSINEYARVELKNLPNTSSIINAIKYEYQRQVELISVGDTSSLMEPETRGWTGSSTVKLRSKETTIDYRYMPDPELPYINLAQDVISGVRGLMPQLPDDIMRMLMKKPYQLSLKDAKILTYNSNQNDMYNHEALRSYYLDTFREFSKLAGERSNAKLPTNWIIHEFLGDLNKLQIPLARAKEILPPPVFAQFLKLLHEEVISATSGKMLLFHILENFKQSNCQDLSIPDFSKLIEKFELHAINQVDPQELMDLCNDVIAQHTDDTFIRNLVTGKKKSSLKFLIGQGMRRSQGRIKANEFEKKFKEILNIQW</sequence>
<keyword id="KW-0067">ATP-binding</keyword>
<keyword id="KW-0436">Ligase</keyword>
<keyword id="KW-0496">Mitochondrion</keyword>
<keyword id="KW-0547">Nucleotide-binding</keyword>
<keyword id="KW-0648">Protein biosynthesis</keyword>